<evidence type="ECO:0000255" key="1">
    <source>
        <dbReference type="HAMAP-Rule" id="MF_01813"/>
    </source>
</evidence>
<evidence type="ECO:0000305" key="2"/>
<dbReference type="EC" id="2.1.1.163" evidence="1"/>
<dbReference type="EC" id="2.1.1.201" evidence="1"/>
<dbReference type="EMBL" id="AE008922">
    <property type="protein sequence ID" value="AAM42757.1"/>
    <property type="status" value="ALT_INIT"/>
    <property type="molecule type" value="Genomic_DNA"/>
</dbReference>
<dbReference type="RefSeq" id="NP_638833.2">
    <property type="nucleotide sequence ID" value="NC_003902.1"/>
</dbReference>
<dbReference type="RefSeq" id="WP_014509029.1">
    <property type="nucleotide sequence ID" value="NC_003902.1"/>
</dbReference>
<dbReference type="SMR" id="Q8P558"/>
<dbReference type="STRING" id="190485.XCC3488"/>
<dbReference type="EnsemblBacteria" id="AAM42757">
    <property type="protein sequence ID" value="AAM42757"/>
    <property type="gene ID" value="XCC3488"/>
</dbReference>
<dbReference type="GeneID" id="58011981"/>
<dbReference type="KEGG" id="xcc:XCC3488"/>
<dbReference type="PATRIC" id="fig|190485.4.peg.3730"/>
<dbReference type="eggNOG" id="COG2226">
    <property type="taxonomic scope" value="Bacteria"/>
</dbReference>
<dbReference type="HOGENOM" id="CLU_037990_0_0_6"/>
<dbReference type="OrthoDB" id="9808140at2"/>
<dbReference type="UniPathway" id="UPA00079">
    <property type="reaction ID" value="UER00169"/>
</dbReference>
<dbReference type="UniPathway" id="UPA00232"/>
<dbReference type="Proteomes" id="UP000001010">
    <property type="component" value="Chromosome"/>
</dbReference>
<dbReference type="GO" id="GO:0008425">
    <property type="term" value="F:2-methoxy-6-polyprenyl-1,4-benzoquinol methyltransferase activity"/>
    <property type="evidence" value="ECO:0000318"/>
    <property type="project" value="GO_Central"/>
</dbReference>
<dbReference type="GO" id="GO:0043770">
    <property type="term" value="F:demethylmenaquinone methyltransferase activity"/>
    <property type="evidence" value="ECO:0007669"/>
    <property type="project" value="UniProtKB-UniRule"/>
</dbReference>
<dbReference type="GO" id="GO:0009060">
    <property type="term" value="P:aerobic respiration"/>
    <property type="evidence" value="ECO:0007669"/>
    <property type="project" value="UniProtKB-UniRule"/>
</dbReference>
<dbReference type="GO" id="GO:0009234">
    <property type="term" value="P:menaquinone biosynthetic process"/>
    <property type="evidence" value="ECO:0007669"/>
    <property type="project" value="UniProtKB-UniRule"/>
</dbReference>
<dbReference type="GO" id="GO:0032259">
    <property type="term" value="P:methylation"/>
    <property type="evidence" value="ECO:0007669"/>
    <property type="project" value="UniProtKB-KW"/>
</dbReference>
<dbReference type="GO" id="GO:0006744">
    <property type="term" value="P:ubiquinone biosynthetic process"/>
    <property type="evidence" value="ECO:0000318"/>
    <property type="project" value="GO_Central"/>
</dbReference>
<dbReference type="CDD" id="cd02440">
    <property type="entry name" value="AdoMet_MTases"/>
    <property type="match status" value="1"/>
</dbReference>
<dbReference type="Gene3D" id="3.40.50.150">
    <property type="entry name" value="Vaccinia Virus protein VP39"/>
    <property type="match status" value="1"/>
</dbReference>
<dbReference type="HAMAP" id="MF_01813">
    <property type="entry name" value="MenG_UbiE_methyltr"/>
    <property type="match status" value="1"/>
</dbReference>
<dbReference type="InterPro" id="IPR029063">
    <property type="entry name" value="SAM-dependent_MTases_sf"/>
</dbReference>
<dbReference type="InterPro" id="IPR004033">
    <property type="entry name" value="UbiE/COQ5_MeTrFase"/>
</dbReference>
<dbReference type="InterPro" id="IPR023576">
    <property type="entry name" value="UbiE/COQ5_MeTrFase_CS"/>
</dbReference>
<dbReference type="NCBIfam" id="TIGR01934">
    <property type="entry name" value="MenG_MenH_UbiE"/>
    <property type="match status" value="1"/>
</dbReference>
<dbReference type="NCBIfam" id="NF001242">
    <property type="entry name" value="PRK00216.1-3"/>
    <property type="match status" value="1"/>
</dbReference>
<dbReference type="NCBIfam" id="NF001244">
    <property type="entry name" value="PRK00216.1-5"/>
    <property type="match status" value="1"/>
</dbReference>
<dbReference type="PANTHER" id="PTHR43591:SF24">
    <property type="entry name" value="2-METHOXY-6-POLYPRENYL-1,4-BENZOQUINOL METHYLASE, MITOCHONDRIAL"/>
    <property type="match status" value="1"/>
</dbReference>
<dbReference type="PANTHER" id="PTHR43591">
    <property type="entry name" value="METHYLTRANSFERASE"/>
    <property type="match status" value="1"/>
</dbReference>
<dbReference type="Pfam" id="PF01209">
    <property type="entry name" value="Ubie_methyltran"/>
    <property type="match status" value="1"/>
</dbReference>
<dbReference type="SUPFAM" id="SSF53335">
    <property type="entry name" value="S-adenosyl-L-methionine-dependent methyltransferases"/>
    <property type="match status" value="1"/>
</dbReference>
<dbReference type="PROSITE" id="PS51608">
    <property type="entry name" value="SAM_MT_UBIE"/>
    <property type="match status" value="1"/>
</dbReference>
<dbReference type="PROSITE" id="PS01183">
    <property type="entry name" value="UBIE_1"/>
    <property type="match status" value="1"/>
</dbReference>
<dbReference type="PROSITE" id="PS01184">
    <property type="entry name" value="UBIE_2"/>
    <property type="match status" value="1"/>
</dbReference>
<protein>
    <recommendedName>
        <fullName evidence="1">Ubiquinone/menaquinone biosynthesis C-methyltransferase UbiE</fullName>
        <ecNumber evidence="1">2.1.1.163</ecNumber>
        <ecNumber evidence="1">2.1.1.201</ecNumber>
    </recommendedName>
    <alternativeName>
        <fullName evidence="1">2-methoxy-6-polyprenyl-1,4-benzoquinol methylase</fullName>
    </alternativeName>
    <alternativeName>
        <fullName evidence="1">Demethylmenaquinone methyltransferase</fullName>
    </alternativeName>
</protein>
<reference key="1">
    <citation type="journal article" date="2002" name="Nature">
        <title>Comparison of the genomes of two Xanthomonas pathogens with differing host specificities.</title>
        <authorList>
            <person name="da Silva A.C.R."/>
            <person name="Ferro J.A."/>
            <person name="Reinach F.C."/>
            <person name="Farah C.S."/>
            <person name="Furlan L.R."/>
            <person name="Quaggio R.B."/>
            <person name="Monteiro-Vitorello C.B."/>
            <person name="Van Sluys M.A."/>
            <person name="Almeida N.F. Jr."/>
            <person name="Alves L.M.C."/>
            <person name="do Amaral A.M."/>
            <person name="Bertolini M.C."/>
            <person name="Camargo L.E.A."/>
            <person name="Camarotte G."/>
            <person name="Cannavan F."/>
            <person name="Cardozo J."/>
            <person name="Chambergo F."/>
            <person name="Ciapina L.P."/>
            <person name="Cicarelli R.M.B."/>
            <person name="Coutinho L.L."/>
            <person name="Cursino-Santos J.R."/>
            <person name="El-Dorry H."/>
            <person name="Faria J.B."/>
            <person name="Ferreira A.J.S."/>
            <person name="Ferreira R.C.C."/>
            <person name="Ferro M.I.T."/>
            <person name="Formighieri E.F."/>
            <person name="Franco M.C."/>
            <person name="Greggio C.C."/>
            <person name="Gruber A."/>
            <person name="Katsuyama A.M."/>
            <person name="Kishi L.T."/>
            <person name="Leite R.P."/>
            <person name="Lemos E.G.M."/>
            <person name="Lemos M.V.F."/>
            <person name="Locali E.C."/>
            <person name="Machado M.A."/>
            <person name="Madeira A.M.B.N."/>
            <person name="Martinez-Rossi N.M."/>
            <person name="Martins E.C."/>
            <person name="Meidanis J."/>
            <person name="Menck C.F.M."/>
            <person name="Miyaki C.Y."/>
            <person name="Moon D.H."/>
            <person name="Moreira L.M."/>
            <person name="Novo M.T.M."/>
            <person name="Okura V.K."/>
            <person name="Oliveira M.C."/>
            <person name="Oliveira V.R."/>
            <person name="Pereira H.A."/>
            <person name="Rossi A."/>
            <person name="Sena J.A.D."/>
            <person name="Silva C."/>
            <person name="de Souza R.F."/>
            <person name="Spinola L.A.F."/>
            <person name="Takita M.A."/>
            <person name="Tamura R.E."/>
            <person name="Teixeira E.C."/>
            <person name="Tezza R.I.D."/>
            <person name="Trindade dos Santos M."/>
            <person name="Truffi D."/>
            <person name="Tsai S.M."/>
            <person name="White F.F."/>
            <person name="Setubal J.C."/>
            <person name="Kitajima J.P."/>
        </authorList>
    </citation>
    <scope>NUCLEOTIDE SEQUENCE [LARGE SCALE GENOMIC DNA]</scope>
    <source>
        <strain>ATCC 33913 / DSM 3586 / NCPPB 528 / LMG 568 / P 25</strain>
    </source>
</reference>
<feature type="chain" id="PRO_0000193354" description="Ubiquinone/menaquinone biosynthesis C-methyltransferase UbiE">
    <location>
        <begin position="1"/>
        <end position="253"/>
    </location>
</feature>
<feature type="binding site" evidence="1">
    <location>
        <position position="76"/>
    </location>
    <ligand>
        <name>S-adenosyl-L-methionine</name>
        <dbReference type="ChEBI" id="CHEBI:59789"/>
    </ligand>
</feature>
<feature type="binding site" evidence="1">
    <location>
        <position position="97"/>
    </location>
    <ligand>
        <name>S-adenosyl-L-methionine</name>
        <dbReference type="ChEBI" id="CHEBI:59789"/>
    </ligand>
</feature>
<feature type="binding site" evidence="1">
    <location>
        <begin position="125"/>
        <end position="126"/>
    </location>
    <ligand>
        <name>S-adenosyl-L-methionine</name>
        <dbReference type="ChEBI" id="CHEBI:59789"/>
    </ligand>
</feature>
<feature type="binding site" evidence="1">
    <location>
        <position position="142"/>
    </location>
    <ligand>
        <name>S-adenosyl-L-methionine</name>
        <dbReference type="ChEBI" id="CHEBI:59789"/>
    </ligand>
</feature>
<gene>
    <name evidence="1" type="primary">ubiE</name>
    <name type="ordered locus">XCC3488</name>
</gene>
<sequence length="253" mass="27966">MSESPYTSGTTHFGFRDVAAKDKQKLVGEVFTSVARNYDLMNDLMSLGIHRAWKRYFVATAQVKPGDRVLDLAGGTGDIAVLLKERVGNEGAVVLGDINAGMLSVGRDRLTNRGLVAGFDYVQCNAEALPFPDQSFDLVTISFGLRNVTDKDAALREMYRVLKVGGQARVLEFSEVTADWFKPIYDFHSFKILPKLGQLFARDADSYQYLAESIRKHPPQDSLKGMMGEAGFARCHYKNLTGGIVAIHSGYKI</sequence>
<accession>Q8P558</accession>
<proteinExistence type="inferred from homology"/>
<organism>
    <name type="scientific">Xanthomonas campestris pv. campestris (strain ATCC 33913 / DSM 3586 / NCPPB 528 / LMG 568 / P 25)</name>
    <dbReference type="NCBI Taxonomy" id="190485"/>
    <lineage>
        <taxon>Bacteria</taxon>
        <taxon>Pseudomonadati</taxon>
        <taxon>Pseudomonadota</taxon>
        <taxon>Gammaproteobacteria</taxon>
        <taxon>Lysobacterales</taxon>
        <taxon>Lysobacteraceae</taxon>
        <taxon>Xanthomonas</taxon>
    </lineage>
</organism>
<comment type="function">
    <text evidence="1">Methyltransferase required for the conversion of demethylmenaquinol (DMKH2) to menaquinol (MKH2) and the conversion of 2-polyprenyl-6-methoxy-1,4-benzoquinol (DDMQH2) to 2-polyprenyl-3-methyl-6-methoxy-1,4-benzoquinol (DMQH2).</text>
</comment>
<comment type="catalytic activity">
    <reaction evidence="1">
        <text>a 2-demethylmenaquinol + S-adenosyl-L-methionine = a menaquinol + S-adenosyl-L-homocysteine + H(+)</text>
        <dbReference type="Rhea" id="RHEA:42640"/>
        <dbReference type="Rhea" id="RHEA-COMP:9539"/>
        <dbReference type="Rhea" id="RHEA-COMP:9563"/>
        <dbReference type="ChEBI" id="CHEBI:15378"/>
        <dbReference type="ChEBI" id="CHEBI:18151"/>
        <dbReference type="ChEBI" id="CHEBI:55437"/>
        <dbReference type="ChEBI" id="CHEBI:57856"/>
        <dbReference type="ChEBI" id="CHEBI:59789"/>
        <dbReference type="EC" id="2.1.1.163"/>
    </reaction>
</comment>
<comment type="catalytic activity">
    <reaction evidence="1">
        <text>a 2-methoxy-6-(all-trans-polyprenyl)benzene-1,4-diol + S-adenosyl-L-methionine = a 5-methoxy-2-methyl-3-(all-trans-polyprenyl)benzene-1,4-diol + S-adenosyl-L-homocysteine + H(+)</text>
        <dbReference type="Rhea" id="RHEA:28286"/>
        <dbReference type="Rhea" id="RHEA-COMP:10858"/>
        <dbReference type="Rhea" id="RHEA-COMP:10859"/>
        <dbReference type="ChEBI" id="CHEBI:15378"/>
        <dbReference type="ChEBI" id="CHEBI:57856"/>
        <dbReference type="ChEBI" id="CHEBI:59789"/>
        <dbReference type="ChEBI" id="CHEBI:84166"/>
        <dbReference type="ChEBI" id="CHEBI:84167"/>
        <dbReference type="EC" id="2.1.1.201"/>
    </reaction>
</comment>
<comment type="pathway">
    <text evidence="1">Quinol/quinone metabolism; menaquinone biosynthesis; menaquinol from 1,4-dihydroxy-2-naphthoate: step 2/2.</text>
</comment>
<comment type="pathway">
    <text evidence="1">Cofactor biosynthesis; ubiquinone biosynthesis.</text>
</comment>
<comment type="similarity">
    <text evidence="1">Belongs to the class I-like SAM-binding methyltransferase superfamily. MenG/UbiE family.</text>
</comment>
<comment type="sequence caution" evidence="2">
    <conflict type="erroneous initiation">
        <sequence resource="EMBL-CDS" id="AAM42757"/>
    </conflict>
</comment>
<keyword id="KW-0474">Menaquinone biosynthesis</keyword>
<keyword id="KW-0489">Methyltransferase</keyword>
<keyword id="KW-1185">Reference proteome</keyword>
<keyword id="KW-0949">S-adenosyl-L-methionine</keyword>
<keyword id="KW-0808">Transferase</keyword>
<keyword id="KW-0831">Ubiquinone biosynthesis</keyword>
<name>UBIE_XANCP</name>